<protein>
    <recommendedName>
        <fullName evidence="1">Tyrosine--tRNA ligase 1</fullName>
        <ecNumber evidence="1">6.1.1.1</ecNumber>
    </recommendedName>
    <alternativeName>
        <fullName evidence="1">Tyrosyl-tRNA synthetase 1</fullName>
        <shortName evidence="1">TyrRS 1</shortName>
    </alternativeName>
</protein>
<accession>Q97LC5</accession>
<evidence type="ECO:0000255" key="1">
    <source>
        <dbReference type="HAMAP-Rule" id="MF_02006"/>
    </source>
</evidence>
<feature type="chain" id="PRO_0000234697" description="Tyrosine--tRNA ligase 1">
    <location>
        <begin position="1"/>
        <end position="407"/>
    </location>
</feature>
<feature type="domain" description="S4 RNA-binding" evidence="1">
    <location>
        <begin position="340"/>
        <end position="406"/>
    </location>
</feature>
<feature type="short sequence motif" description="'HIGH' region">
    <location>
        <begin position="40"/>
        <end position="49"/>
    </location>
</feature>
<feature type="short sequence motif" description="'KMSKS' region">
    <location>
        <begin position="228"/>
        <end position="232"/>
    </location>
</feature>
<feature type="binding site" evidence="1">
    <location>
        <position position="35"/>
    </location>
    <ligand>
        <name>L-tyrosine</name>
        <dbReference type="ChEBI" id="CHEBI:58315"/>
    </ligand>
</feature>
<feature type="binding site" evidence="1">
    <location>
        <position position="168"/>
    </location>
    <ligand>
        <name>L-tyrosine</name>
        <dbReference type="ChEBI" id="CHEBI:58315"/>
    </ligand>
</feature>
<feature type="binding site" evidence="1">
    <location>
        <position position="172"/>
    </location>
    <ligand>
        <name>L-tyrosine</name>
        <dbReference type="ChEBI" id="CHEBI:58315"/>
    </ligand>
</feature>
<feature type="binding site" evidence="1">
    <location>
        <position position="231"/>
    </location>
    <ligand>
        <name>ATP</name>
        <dbReference type="ChEBI" id="CHEBI:30616"/>
    </ligand>
</feature>
<proteinExistence type="inferred from homology"/>
<comment type="function">
    <text evidence="1">Catalyzes the attachment of tyrosine to tRNA(Tyr) in a two-step reaction: tyrosine is first activated by ATP to form Tyr-AMP and then transferred to the acceptor end of tRNA(Tyr).</text>
</comment>
<comment type="catalytic activity">
    <reaction evidence="1">
        <text>tRNA(Tyr) + L-tyrosine + ATP = L-tyrosyl-tRNA(Tyr) + AMP + diphosphate + H(+)</text>
        <dbReference type="Rhea" id="RHEA:10220"/>
        <dbReference type="Rhea" id="RHEA-COMP:9706"/>
        <dbReference type="Rhea" id="RHEA-COMP:9707"/>
        <dbReference type="ChEBI" id="CHEBI:15378"/>
        <dbReference type="ChEBI" id="CHEBI:30616"/>
        <dbReference type="ChEBI" id="CHEBI:33019"/>
        <dbReference type="ChEBI" id="CHEBI:58315"/>
        <dbReference type="ChEBI" id="CHEBI:78442"/>
        <dbReference type="ChEBI" id="CHEBI:78536"/>
        <dbReference type="ChEBI" id="CHEBI:456215"/>
        <dbReference type="EC" id="6.1.1.1"/>
    </reaction>
</comment>
<comment type="subunit">
    <text evidence="1">Homodimer.</text>
</comment>
<comment type="subcellular location">
    <subcellularLocation>
        <location evidence="1">Cytoplasm</location>
    </subcellularLocation>
</comment>
<comment type="similarity">
    <text evidence="1">Belongs to the class-I aminoacyl-tRNA synthetase family. TyrS type 1 subfamily.</text>
</comment>
<reference key="1">
    <citation type="journal article" date="2001" name="J. Bacteriol.">
        <title>Genome sequence and comparative analysis of the solvent-producing bacterium Clostridium acetobutylicum.</title>
        <authorList>
            <person name="Noelling J."/>
            <person name="Breton G."/>
            <person name="Omelchenko M.V."/>
            <person name="Makarova K.S."/>
            <person name="Zeng Q."/>
            <person name="Gibson R."/>
            <person name="Lee H.M."/>
            <person name="Dubois J."/>
            <person name="Qiu D."/>
            <person name="Hitti J."/>
            <person name="Wolf Y.I."/>
            <person name="Tatusov R.L."/>
            <person name="Sabathe F."/>
            <person name="Doucette-Stamm L.A."/>
            <person name="Soucaille P."/>
            <person name="Daly M.J."/>
            <person name="Bennett G.N."/>
            <person name="Koonin E.V."/>
            <person name="Smith D.R."/>
        </authorList>
    </citation>
    <scope>NUCLEOTIDE SEQUENCE [LARGE SCALE GENOMIC DNA]</scope>
    <source>
        <strain>ATCC 824 / DSM 792 / JCM 1419 / IAM 19013 / LMG 5710 / NBRC 13948 / NRRL B-527 / VKM B-1787 / 2291 / W</strain>
    </source>
</reference>
<keyword id="KW-0030">Aminoacyl-tRNA synthetase</keyword>
<keyword id="KW-0067">ATP-binding</keyword>
<keyword id="KW-0963">Cytoplasm</keyword>
<keyword id="KW-0436">Ligase</keyword>
<keyword id="KW-0547">Nucleotide-binding</keyword>
<keyword id="KW-0648">Protein biosynthesis</keyword>
<keyword id="KW-1185">Reference proteome</keyword>
<keyword id="KW-0694">RNA-binding</keyword>
<name>SYY1_CLOAB</name>
<organism>
    <name type="scientific">Clostridium acetobutylicum (strain ATCC 824 / DSM 792 / JCM 1419 / IAM 19013 / LMG 5710 / NBRC 13948 / NRRL B-527 / VKM B-1787 / 2291 / W)</name>
    <dbReference type="NCBI Taxonomy" id="272562"/>
    <lineage>
        <taxon>Bacteria</taxon>
        <taxon>Bacillati</taxon>
        <taxon>Bacillota</taxon>
        <taxon>Clostridia</taxon>
        <taxon>Eubacteriales</taxon>
        <taxon>Clostridiaceae</taxon>
        <taxon>Clostridium</taxon>
    </lineage>
</organism>
<gene>
    <name evidence="1" type="primary">tyrS1</name>
    <name type="ordered locus">CA_C0637</name>
</gene>
<sequence>MSNVLDELIERGYAKQFTHEEETRKLLSEEKVTFYIGFDPTGDSLHVGHFIALMLMARMQKAGHRPIVLIGGGTAMVGDPTGKTDMRKMLTREEINHNVECLKKQMSRFIDFSDDKAIIVNNAEWLMGQNYIEFLREVGVHFSVNKMLTAECFKQRMEKGLSFLEFNYMLMQGFDFYKLNEKYDCKMELGGDDQWSNMIAGVELIRRKSNKKAYAMTSALLTNSEGKKMGKTEKGALWLDAEKTSPYDFFQYWRNVNDADVEKCLSMLTFLPMDEVRRLASLKDQEINKAKEVLAYEVTKLVHGEEEAKKALNSSKALFGGGTNMDNVPTVSIPEDMLSSSILDVLVHTKIIPSKGEGRRLVQQGGITLNDTKVEDFNYEITKEDFNDDGFALVRRGKKKYYKIVIG</sequence>
<dbReference type="EC" id="6.1.1.1" evidence="1"/>
<dbReference type="EMBL" id="AE001437">
    <property type="protein sequence ID" value="AAK78614.1"/>
    <property type="molecule type" value="Genomic_DNA"/>
</dbReference>
<dbReference type="PIR" id="C96978">
    <property type="entry name" value="C96978"/>
</dbReference>
<dbReference type="RefSeq" id="NP_347274.1">
    <property type="nucleotide sequence ID" value="NC_003030.1"/>
</dbReference>
<dbReference type="SMR" id="Q97LC5"/>
<dbReference type="STRING" id="272562.CA_C0637"/>
<dbReference type="KEGG" id="cac:CA_C0637"/>
<dbReference type="PATRIC" id="fig|272562.8.peg.840"/>
<dbReference type="eggNOG" id="COG0162">
    <property type="taxonomic scope" value="Bacteria"/>
</dbReference>
<dbReference type="HOGENOM" id="CLU_024003_0_3_9"/>
<dbReference type="OrthoDB" id="9804243at2"/>
<dbReference type="Proteomes" id="UP000000814">
    <property type="component" value="Chromosome"/>
</dbReference>
<dbReference type="GO" id="GO:0005829">
    <property type="term" value="C:cytosol"/>
    <property type="evidence" value="ECO:0007669"/>
    <property type="project" value="TreeGrafter"/>
</dbReference>
<dbReference type="GO" id="GO:0005524">
    <property type="term" value="F:ATP binding"/>
    <property type="evidence" value="ECO:0007669"/>
    <property type="project" value="UniProtKB-UniRule"/>
</dbReference>
<dbReference type="GO" id="GO:0003723">
    <property type="term" value="F:RNA binding"/>
    <property type="evidence" value="ECO:0007669"/>
    <property type="project" value="UniProtKB-KW"/>
</dbReference>
<dbReference type="GO" id="GO:0004831">
    <property type="term" value="F:tyrosine-tRNA ligase activity"/>
    <property type="evidence" value="ECO:0007669"/>
    <property type="project" value="UniProtKB-UniRule"/>
</dbReference>
<dbReference type="GO" id="GO:0006437">
    <property type="term" value="P:tyrosyl-tRNA aminoacylation"/>
    <property type="evidence" value="ECO:0007669"/>
    <property type="project" value="UniProtKB-UniRule"/>
</dbReference>
<dbReference type="CDD" id="cd00805">
    <property type="entry name" value="TyrRS_core"/>
    <property type="match status" value="1"/>
</dbReference>
<dbReference type="FunFam" id="1.10.240.10:FF:000001">
    <property type="entry name" value="Tyrosine--tRNA ligase"/>
    <property type="match status" value="1"/>
</dbReference>
<dbReference type="FunFam" id="3.40.50.620:FF:000008">
    <property type="entry name" value="Tyrosine--tRNA ligase"/>
    <property type="match status" value="1"/>
</dbReference>
<dbReference type="Gene3D" id="3.40.50.620">
    <property type="entry name" value="HUPs"/>
    <property type="match status" value="1"/>
</dbReference>
<dbReference type="Gene3D" id="3.10.290.10">
    <property type="entry name" value="RNA-binding S4 domain"/>
    <property type="match status" value="1"/>
</dbReference>
<dbReference type="Gene3D" id="1.10.240.10">
    <property type="entry name" value="Tyrosyl-Transfer RNA Synthetase"/>
    <property type="match status" value="1"/>
</dbReference>
<dbReference type="HAMAP" id="MF_02006">
    <property type="entry name" value="Tyr_tRNA_synth_type1"/>
    <property type="match status" value="1"/>
</dbReference>
<dbReference type="InterPro" id="IPR001412">
    <property type="entry name" value="aa-tRNA-synth_I_CS"/>
</dbReference>
<dbReference type="InterPro" id="IPR002305">
    <property type="entry name" value="aa-tRNA-synth_Ic"/>
</dbReference>
<dbReference type="InterPro" id="IPR014729">
    <property type="entry name" value="Rossmann-like_a/b/a_fold"/>
</dbReference>
<dbReference type="InterPro" id="IPR036986">
    <property type="entry name" value="S4_RNA-bd_sf"/>
</dbReference>
<dbReference type="InterPro" id="IPR054608">
    <property type="entry name" value="SYY-like_C"/>
</dbReference>
<dbReference type="InterPro" id="IPR002307">
    <property type="entry name" value="Tyr-tRNA-ligase"/>
</dbReference>
<dbReference type="InterPro" id="IPR024088">
    <property type="entry name" value="Tyr-tRNA-ligase_bac-type"/>
</dbReference>
<dbReference type="InterPro" id="IPR024107">
    <property type="entry name" value="Tyr-tRNA-ligase_bac_1"/>
</dbReference>
<dbReference type="NCBIfam" id="TIGR00234">
    <property type="entry name" value="tyrS"/>
    <property type="match status" value="1"/>
</dbReference>
<dbReference type="PANTHER" id="PTHR11766:SF0">
    <property type="entry name" value="TYROSINE--TRNA LIGASE, MITOCHONDRIAL"/>
    <property type="match status" value="1"/>
</dbReference>
<dbReference type="PANTHER" id="PTHR11766">
    <property type="entry name" value="TYROSYL-TRNA SYNTHETASE"/>
    <property type="match status" value="1"/>
</dbReference>
<dbReference type="Pfam" id="PF22421">
    <property type="entry name" value="SYY_C-terminal"/>
    <property type="match status" value="1"/>
</dbReference>
<dbReference type="Pfam" id="PF00579">
    <property type="entry name" value="tRNA-synt_1b"/>
    <property type="match status" value="1"/>
</dbReference>
<dbReference type="PRINTS" id="PR01040">
    <property type="entry name" value="TRNASYNTHTYR"/>
</dbReference>
<dbReference type="SUPFAM" id="SSF55174">
    <property type="entry name" value="Alpha-L RNA-binding motif"/>
    <property type="match status" value="1"/>
</dbReference>
<dbReference type="SUPFAM" id="SSF52374">
    <property type="entry name" value="Nucleotidylyl transferase"/>
    <property type="match status" value="1"/>
</dbReference>
<dbReference type="PROSITE" id="PS00178">
    <property type="entry name" value="AA_TRNA_LIGASE_I"/>
    <property type="match status" value="1"/>
</dbReference>
<dbReference type="PROSITE" id="PS50889">
    <property type="entry name" value="S4"/>
    <property type="match status" value="1"/>
</dbReference>